<reference key="1">
    <citation type="journal article" date="2000" name="J. Gen. Virol.">
        <title>Phylogenetic analysis of influenza C virus nonstructural (NS) protein genes and identification of the NS2 protein.</title>
        <authorList>
            <person name="Alamgir A.S.M."/>
            <person name="Matsuzaki Y."/>
            <person name="Hongo S."/>
            <person name="Tsuchiya E."/>
            <person name="Sugawara K."/>
            <person name="Muraki Y."/>
            <person name="Nakamura K."/>
        </authorList>
    </citation>
    <scope>NUCLEOTIDE SEQUENCE [GENOMIC RNA]</scope>
</reference>
<organismHost>
    <name type="scientific">Homo sapiens</name>
    <name type="common">Human</name>
    <dbReference type="NCBI Taxonomy" id="9606"/>
</organismHost>
<organismHost>
    <name type="scientific">Sus scrofa</name>
    <name type="common">Pig</name>
    <dbReference type="NCBI Taxonomy" id="9823"/>
</organismHost>
<dbReference type="EMBL" id="AB034167">
    <property type="protein sequence ID" value="BAB12072.1"/>
    <property type="molecule type" value="Genomic_RNA"/>
</dbReference>
<dbReference type="SMR" id="Q9ENX7"/>
<dbReference type="GO" id="GO:0042025">
    <property type="term" value="C:host cell nucleus"/>
    <property type="evidence" value="ECO:0007669"/>
    <property type="project" value="UniProtKB-SubCell"/>
</dbReference>
<dbReference type="GO" id="GO:0044423">
    <property type="term" value="C:virion component"/>
    <property type="evidence" value="ECO:0007669"/>
    <property type="project" value="UniProtKB-UniRule"/>
</dbReference>
<dbReference type="GO" id="GO:0039675">
    <property type="term" value="P:exit of virus from host cell nucleus through nuclear pore"/>
    <property type="evidence" value="ECO:0007669"/>
    <property type="project" value="UniProtKB-UniRule"/>
</dbReference>
<dbReference type="HAMAP" id="MF_04067">
    <property type="entry name" value="INFV_NEP"/>
    <property type="match status" value="1"/>
</dbReference>
<dbReference type="InterPro" id="IPR005188">
    <property type="entry name" value="Flu_C_NS2"/>
</dbReference>
<dbReference type="InterPro" id="IPR000968">
    <property type="entry name" value="Flu_NS2"/>
</dbReference>
<dbReference type="Pfam" id="PF03555">
    <property type="entry name" value="Flu_C_NS2"/>
    <property type="match status" value="1"/>
</dbReference>
<sequence length="182" mass="20838">MSDKTVKSTNLMAFIATKMLERQEDLDTCTEMQVEKMKTSTKARLRTESSFAPRTWEDAIKDEILRRSVDTSSLDKWPELKQELENVSDALKADSLWLPMKSLSLYSKVSNQEPNSIPIGEMKHQILTRLKLICSRLEKLDLNLSKAVLGIQNSEDLILIIYNRDICKTTILMIKSLCNSLI</sequence>
<gene>
    <name evidence="1" type="primary">NS</name>
</gene>
<evidence type="ECO:0000255" key="1">
    <source>
        <dbReference type="HAMAP-Rule" id="MF_04067"/>
    </source>
</evidence>
<name>NEP_INCHY</name>
<feature type="chain" id="PRO_0000269460" description="Nuclear export protein">
    <location>
        <begin position="1"/>
        <end position="182"/>
    </location>
</feature>
<feature type="short sequence motif" description="Nuclear export signal" evidence="1">
    <location>
        <begin position="96"/>
        <end position="105"/>
    </location>
</feature>
<feature type="short sequence motif" description="Nuclear export signal" evidence="1">
    <location>
        <begin position="122"/>
        <end position="132"/>
    </location>
</feature>
<accession>Q9ENX7</accession>
<protein>
    <recommendedName>
        <fullName evidence="1">Nuclear export protein</fullName>
        <shortName evidence="1">NEP</shortName>
    </recommendedName>
    <alternativeName>
        <fullName evidence="1">Non-structural protein 2</fullName>
        <shortName evidence="1">NS2</shortName>
    </alternativeName>
</protein>
<comment type="function">
    <text evidence="1">Mediates the nuclear export of encapsidated genomic RNAs (ribonucleoproteins, RNPs). Acts as an adapter between viral RNPs complexes and the nuclear export machinery of the cell. Possesses no intrinsic RNA-binding activity, but includes a C-terminal M1-binding domain. This domain is believed to allow recognition of RNPs bound to the protein M1. Since protein M1 is not available in large quantities before late stages of infection, such an indirect recognition mechanism probably ensures that genomic RNPs are not exported from the host nucleus until sufficient quantities of viral mRNA and progeny genomic RNA have been synthesized. Furthermore, the RNPs enter the host cytoplasm only when associated with the M1 protein that is necessary to guide them to the plasma membrane. May down-regulate viral RNA synthesis when overproduced.</text>
</comment>
<comment type="subunit">
    <text evidence="1">Interacts with protein M1. May interact with host nucleoporin RAB/HRB and exportin XPO1/CRM1.</text>
</comment>
<comment type="subcellular location">
    <subcellularLocation>
        <location evidence="1">Virion</location>
    </subcellularLocation>
    <subcellularLocation>
        <location evidence="1">Host nucleus</location>
    </subcellularLocation>
</comment>
<comment type="alternative products">
    <event type="alternative splicing"/>
    <isoform>
        <id>Q9ENX7-1</id>
        <name>NEP</name>
        <name>NS2</name>
        <sequence type="displayed"/>
    </isoform>
    <isoform>
        <id>Q9ENX6-1</id>
        <name>NS1</name>
        <sequence type="external"/>
    </isoform>
</comment>
<comment type="similarity">
    <text evidence="1">Belongs to the influenza viruses NEP family.</text>
</comment>
<keyword id="KW-0025">Alternative splicing</keyword>
<keyword id="KW-1048">Host nucleus</keyword>
<keyword id="KW-0945">Host-virus interaction</keyword>
<keyword id="KW-0813">Transport</keyword>
<keyword id="KW-0946">Virion</keyword>
<proteinExistence type="inferred from homology"/>
<organism>
    <name type="scientific">Influenza C virus (strain C/Hyogo/1/1983)</name>
    <dbReference type="NCBI Taxonomy" id="203225"/>
    <lineage>
        <taxon>Viruses</taxon>
        <taxon>Riboviria</taxon>
        <taxon>Orthornavirae</taxon>
        <taxon>Negarnaviricota</taxon>
        <taxon>Polyploviricotina</taxon>
        <taxon>Insthoviricetes</taxon>
        <taxon>Articulavirales</taxon>
        <taxon>Orthomyxoviridae</taxon>
        <taxon>Gammainfluenzavirus</taxon>
        <taxon>Gammainfluenzavirus influenzae</taxon>
        <taxon>Influenza C virus</taxon>
    </lineage>
</organism>